<comment type="function">
    <text evidence="3 4 5">Plays an essential role in viral protein synthesis. Plays also a role in active nuclear export of mature particles before host cell lysis, by interacting with host XPO1.</text>
</comment>
<comment type="subunit">
    <text evidence="1 2">Interacts with host SNRPN. Interacts with host XPO1.</text>
</comment>
<comment type="interaction">
    <interactant intactId="EBI-9673535">
        <id>P0DJZ2</id>
    </interactant>
    <interactant intactId="EBI-2550236">
        <id>Q6P5F9</id>
        <label>Xpo1</label>
    </interactant>
    <organismsDiffer>true</organismsDiffer>
    <experiments>2</experiments>
</comment>
<comment type="interaction">
    <interactant intactId="EBI-9673535">
        <id>P0DJZ2</id>
    </interactant>
    <interactant intactId="EBI-9517348">
        <id>Q80U96</id>
        <label>Xpo1</label>
    </interactant>
    <organismsDiffer>true</organismsDiffer>
    <experiments>2</experiments>
</comment>
<comment type="subcellular location">
    <subcellularLocation>
        <location evidence="2">Host nucleus</location>
    </subcellularLocation>
</comment>
<comment type="alternative products">
    <event type="alternative splicing"/>
    <isoform>
        <id>P0DJZ2-1</id>
        <name>NS2Y</name>
        <sequence type="displayed"/>
    </isoform>
    <isoform>
        <id>P0DJZ2-2</id>
        <name>NS2P</name>
        <sequence type="described" ref="VSP_054677"/>
    </isoform>
    <isoform>
        <id>P0DJZ2-3</id>
        <name>NS2L</name>
        <sequence type="described" ref="VSP_054678"/>
    </isoform>
</comment>
<comment type="miscellaneous">
    <molecule>Isoform NS2Y</molecule>
    <text>Splicing isoform (approximately 15% of the molecules).</text>
</comment>
<comment type="miscellaneous">
    <molecule>Isoform NS2P</molecule>
    <text evidence="6">Major splicing isoform (approximately 85% of the molecules).</text>
</comment>
<comment type="miscellaneous">
    <molecule>Isoform NS2L</molecule>
    <text evidence="6">Minor splicing isoform.</text>
</comment>
<accession>P0DJZ2</accession>
<organismHost>
    <name type="scientific">Mus musculus</name>
    <name type="common">Mouse</name>
    <dbReference type="NCBI Taxonomy" id="10090"/>
</organismHost>
<evidence type="ECO:0000269" key="1">
    <source>
    </source>
</evidence>
<evidence type="ECO:0000269" key="2">
    <source>
    </source>
</evidence>
<evidence type="ECO:0000269" key="3">
    <source>
    </source>
</evidence>
<evidence type="ECO:0000269" key="4">
    <source>
    </source>
</evidence>
<evidence type="ECO:0000269" key="5">
    <source>
    </source>
</evidence>
<evidence type="ECO:0000305" key="6"/>
<evidence type="ECO:0007829" key="7">
    <source>
        <dbReference type="PDB" id="6CIT"/>
    </source>
</evidence>
<sequence>MAGNAYSDEVLGATNWLKEKSNQEVFSFVFKNENVQLNGKDIGWNSYKKELQEDELKSLQRGAETTWDQSEDMEWETTVDEMTKKFGTLTIHDTEKYASQPELCTNSTCIGSRGPGFRALEHTKYSCCGHCRNPEHWGSWFQSLPRWSTEPNLVRDRGGFESVLRCGTVEERLQRAAELGLRYDGASS</sequence>
<protein>
    <recommendedName>
        <fullName>Non-structural protein NS2</fullName>
    </recommendedName>
</protein>
<organism>
    <name type="scientific">Murine minute virus (strain MVM prototype)</name>
    <name type="common">MVM</name>
    <name type="synonym">Murine minute virus (strain MVM(p))</name>
    <dbReference type="NCBI Taxonomy" id="648235"/>
    <lineage>
        <taxon>Viruses</taxon>
        <taxon>Monodnaviria</taxon>
        <taxon>Shotokuvirae</taxon>
        <taxon>Cossaviricota</taxon>
        <taxon>Quintoviricetes</taxon>
        <taxon>Piccovirales</taxon>
        <taxon>Parvoviridae</taxon>
        <taxon>Parvovirinae</taxon>
        <taxon>Protoparvovirus</taxon>
        <taxon>Protoparvovirus rodent1</taxon>
    </lineage>
</organism>
<name>NS2_MUMIP</name>
<feature type="chain" id="PRO_0000429047" description="Non-structural protein NS2">
    <location>
        <begin position="1"/>
        <end position="188"/>
    </location>
</feature>
<feature type="splice variant" id="VSP_054678" description="In isoform NS2L." evidence="6">
    <original>YDGASS</original>
    <variation>LGASWLQVPGTREQP</variation>
    <location>
        <begin position="183"/>
        <end position="188"/>
    </location>
</feature>
<feature type="splice variant" id="VSP_054677" description="In isoform NS2P." evidence="6">
    <original>YDGASS</original>
    <variation>PEITWF</variation>
    <location>
        <begin position="183"/>
        <end position="188"/>
    </location>
</feature>
<feature type="helix" evidence="7">
    <location>
        <begin position="78"/>
        <end position="87"/>
    </location>
</feature>
<reference key="1">
    <citation type="journal article" date="1983" name="Nucleic Acids Res.">
        <title>The complete DNA sequence of minute virus of mice, an autonomous parvovirus.</title>
        <authorList>
            <person name="Astell C.R."/>
            <person name="Thomson M."/>
            <person name="Merchlinsky M."/>
            <person name="Ward D.C."/>
        </authorList>
    </citation>
    <scope>NUCLEOTIDE SEQUENCE [GENOMIC DNA]</scope>
</reference>
<reference key="2">
    <citation type="journal article" date="1993" name="J. Virol.">
        <title>NS2 is required for efficient translation of viral mRNA in minute virus of mice-infected murine cells.</title>
        <authorList>
            <person name="Naeger L.K."/>
            <person name="Salome N."/>
            <person name="Pintel D.J."/>
        </authorList>
    </citation>
    <scope>FUNCTION</scope>
</reference>
<reference key="3">
    <citation type="journal article" date="1999" name="J. Virol.">
        <title>Nuclear export factor CRM1 interacts with nonstructural proteins NS2 from parvovirus minute virus of mice.</title>
        <authorList>
            <person name="Bodendorf U."/>
            <person name="Cziepluch C."/>
            <person name="Jauniaux J.C."/>
            <person name="Rommelaere J."/>
            <person name="Salome N."/>
        </authorList>
    </citation>
    <scope>INTERACTION WITH HOST XPO1</scope>
</reference>
<reference key="4">
    <citation type="journal article" date="2002" name="J. Virol.">
        <title>The NS2 proteins of parvovirus minute virus of mice are required for efficient nuclear egress of progeny virions in mouse cells.</title>
        <authorList>
            <person name="Eichwald V."/>
            <person name="Daeffler L."/>
            <person name="Klein M."/>
            <person name="Rommelaere J."/>
            <person name="Salome N."/>
        </authorList>
    </citation>
    <scope>FUNCTION</scope>
</reference>
<reference key="5">
    <citation type="journal article" date="2002" name="J. Virol.">
        <title>Minute virus of mice small nonstructural protein NS2 interacts and colocalizes with the Smn protein.</title>
        <authorList>
            <person name="Young P.J."/>
            <person name="Jensen K.T."/>
            <person name="Burger L.R."/>
            <person name="Pintel D.J."/>
            <person name="Lorson C.L."/>
        </authorList>
    </citation>
    <scope>INTERACTION WITH HOST SNRPN</scope>
    <scope>SUBCELLULAR LOCATION</scope>
</reference>
<reference key="6">
    <citation type="journal article" date="2005" name="J. Virol.">
        <title>Replication of minute virus of mice DNA is critically dependent on accumulated levels of NS2.</title>
        <authorList>
            <person name="Choi E.Y."/>
            <person name="Newman A.E."/>
            <person name="Burger L."/>
            <person name="Pintel D."/>
        </authorList>
    </citation>
    <scope>FUNCTION</scope>
</reference>
<dbReference type="EMBL" id="J02275">
    <property type="status" value="NOT_ANNOTATED_CDS"/>
    <property type="molecule type" value="Genomic_DNA"/>
</dbReference>
<dbReference type="PDB" id="6A38">
    <property type="method" value="X-ray"/>
    <property type="resolution" value="2.69 A"/>
    <property type="chains" value="D=77-94"/>
</dbReference>
<dbReference type="PDB" id="6A3A">
    <property type="method" value="X-ray"/>
    <property type="resolution" value="2.30 A"/>
    <property type="chains" value="D=77-94"/>
</dbReference>
<dbReference type="PDB" id="6A3B">
    <property type="method" value="X-ray"/>
    <property type="resolution" value="2.51 A"/>
    <property type="chains" value="D=76-93"/>
</dbReference>
<dbReference type="PDB" id="6A3C">
    <property type="method" value="X-ray"/>
    <property type="resolution" value="2.35 A"/>
    <property type="chains" value="D=77-95"/>
</dbReference>
<dbReference type="PDB" id="6A3E">
    <property type="method" value="X-ray"/>
    <property type="resolution" value="2.70 A"/>
    <property type="chains" value="D=76-95"/>
</dbReference>
<dbReference type="PDB" id="6CIT">
    <property type="method" value="X-ray"/>
    <property type="resolution" value="2.03 A"/>
    <property type="chains" value="D=77-93"/>
</dbReference>
<dbReference type="PDB" id="6KFT">
    <property type="method" value="X-ray"/>
    <property type="resolution" value="2.51 A"/>
    <property type="chains" value="D=76-93"/>
</dbReference>
<dbReference type="PDBsum" id="6A38"/>
<dbReference type="PDBsum" id="6A3A"/>
<dbReference type="PDBsum" id="6A3B"/>
<dbReference type="PDBsum" id="6A3C"/>
<dbReference type="PDBsum" id="6A3E"/>
<dbReference type="PDBsum" id="6CIT"/>
<dbReference type="PDBsum" id="6KFT"/>
<dbReference type="SMR" id="P0DJZ2"/>
<dbReference type="IntAct" id="P0DJZ2">
    <property type="interactions" value="2"/>
</dbReference>
<dbReference type="Proteomes" id="UP000007019">
    <property type="component" value="Segment"/>
</dbReference>
<dbReference type="GO" id="GO:0042025">
    <property type="term" value="C:host cell nucleus"/>
    <property type="evidence" value="ECO:0007669"/>
    <property type="project" value="UniProtKB-SubCell"/>
</dbReference>
<dbReference type="GO" id="GO:0039675">
    <property type="term" value="P:exit of virus from host cell nucleus through nuclear pore"/>
    <property type="evidence" value="ECO:0000314"/>
    <property type="project" value="UniProtKB"/>
</dbReference>
<keyword id="KW-0002">3D-structure</keyword>
<keyword id="KW-0025">Alternative splicing</keyword>
<keyword id="KW-1048">Host nucleus</keyword>
<keyword id="KW-1185">Reference proteome</keyword>
<gene>
    <name type="primary">NS2</name>
</gene>
<proteinExistence type="evidence at protein level"/>